<feature type="chain" id="PRO_1000066886" description="UPF0229 protein YE2273">
    <location>
        <begin position="1"/>
        <end position="425"/>
    </location>
</feature>
<feature type="region of interest" description="Disordered" evidence="2">
    <location>
        <begin position="84"/>
        <end position="110"/>
    </location>
</feature>
<feature type="compositionally biased region" description="Gly residues" evidence="2">
    <location>
        <begin position="92"/>
        <end position="108"/>
    </location>
</feature>
<proteinExistence type="inferred from homology"/>
<name>Y2273_YERE8</name>
<comment type="similarity">
    <text evidence="1">Belongs to the UPF0229 family.</text>
</comment>
<accession>A1JQJ6</accession>
<sequence>MGYFIDRRLNGKNKSMVNRQRFLRRYKSQIKQSISDAINKRSVTDIESGESVSIPIDDINEPMFHQGRGGLRHRVHPGNDHFITNDRIERPQGGGGGSGSGQGNAGQDGEGEDEFVFQISKDEYLDLLFEDLALPNLKKNQYKQLTEFKTHRAGYTSNGVPANISVVRSLQNSLARRTAMTASKRRELRELEETLKALENSEPAQLLEEERIRKAIAELKQKIARVPFIDTFDLRYKNYERRPEPSSQAVMFCLMDVSGSMDQATKDMAKRFYILLYLFLSRTYKNVDVVYIRHHTQAKEVDEQEFFYSQETGGTIVSSALKLMDEVVQERYDPAQWNIYAAQASDGDNWADDSPLCHELLAKKILPVVRYYSYIEITRRAHQTLWREYEDLQAKYENFAMQHIREPEDIYPVFRELFHRQTVDN</sequence>
<dbReference type="EMBL" id="AM286415">
    <property type="protein sequence ID" value="CAL12333.1"/>
    <property type="molecule type" value="Genomic_DNA"/>
</dbReference>
<dbReference type="RefSeq" id="WP_005169266.1">
    <property type="nucleotide sequence ID" value="NC_008800.1"/>
</dbReference>
<dbReference type="RefSeq" id="YP_001006501.1">
    <property type="nucleotide sequence ID" value="NC_008800.1"/>
</dbReference>
<dbReference type="SMR" id="A1JQJ6"/>
<dbReference type="KEGG" id="yen:YE2273"/>
<dbReference type="PATRIC" id="fig|393305.7.peg.2433"/>
<dbReference type="eggNOG" id="COG2718">
    <property type="taxonomic scope" value="Bacteria"/>
</dbReference>
<dbReference type="HOGENOM" id="CLU_049702_0_0_6"/>
<dbReference type="OrthoDB" id="9788289at2"/>
<dbReference type="Proteomes" id="UP000000642">
    <property type="component" value="Chromosome"/>
</dbReference>
<dbReference type="HAMAP" id="MF_01232">
    <property type="entry name" value="UPF0229"/>
    <property type="match status" value="1"/>
</dbReference>
<dbReference type="InterPro" id="IPR006698">
    <property type="entry name" value="UPF0229"/>
</dbReference>
<dbReference type="NCBIfam" id="NF003707">
    <property type="entry name" value="PRK05325.1-2"/>
    <property type="match status" value="1"/>
</dbReference>
<dbReference type="NCBIfam" id="NF003708">
    <property type="entry name" value="PRK05325.1-3"/>
    <property type="match status" value="1"/>
</dbReference>
<dbReference type="PANTHER" id="PTHR30510">
    <property type="entry name" value="UPF0229 PROTEIN YEAH"/>
    <property type="match status" value="1"/>
</dbReference>
<dbReference type="PANTHER" id="PTHR30510:SF2">
    <property type="entry name" value="UPF0229 PROTEIN YEAH"/>
    <property type="match status" value="1"/>
</dbReference>
<dbReference type="Pfam" id="PF04285">
    <property type="entry name" value="DUF444"/>
    <property type="match status" value="1"/>
</dbReference>
<reference key="1">
    <citation type="journal article" date="2006" name="PLoS Genet.">
        <title>The complete genome sequence and comparative genome analysis of the high pathogenicity Yersinia enterocolitica strain 8081.</title>
        <authorList>
            <person name="Thomson N.R."/>
            <person name="Howard S."/>
            <person name="Wren B.W."/>
            <person name="Holden M.T.G."/>
            <person name="Crossman L."/>
            <person name="Challis G.L."/>
            <person name="Churcher C."/>
            <person name="Mungall K."/>
            <person name="Brooks K."/>
            <person name="Chillingworth T."/>
            <person name="Feltwell T."/>
            <person name="Abdellah Z."/>
            <person name="Hauser H."/>
            <person name="Jagels K."/>
            <person name="Maddison M."/>
            <person name="Moule S."/>
            <person name="Sanders M."/>
            <person name="Whitehead S."/>
            <person name="Quail M.A."/>
            <person name="Dougan G."/>
            <person name="Parkhill J."/>
            <person name="Prentice M.B."/>
        </authorList>
    </citation>
    <scope>NUCLEOTIDE SEQUENCE [LARGE SCALE GENOMIC DNA]</scope>
    <source>
        <strain>NCTC 13174 / 8081</strain>
    </source>
</reference>
<evidence type="ECO:0000255" key="1">
    <source>
        <dbReference type="HAMAP-Rule" id="MF_01232"/>
    </source>
</evidence>
<evidence type="ECO:0000256" key="2">
    <source>
        <dbReference type="SAM" id="MobiDB-lite"/>
    </source>
</evidence>
<protein>
    <recommendedName>
        <fullName evidence="1">UPF0229 protein YE2273</fullName>
    </recommendedName>
</protein>
<organism>
    <name type="scientific">Yersinia enterocolitica serotype O:8 / biotype 1B (strain NCTC 13174 / 8081)</name>
    <dbReference type="NCBI Taxonomy" id="393305"/>
    <lineage>
        <taxon>Bacteria</taxon>
        <taxon>Pseudomonadati</taxon>
        <taxon>Pseudomonadota</taxon>
        <taxon>Gammaproteobacteria</taxon>
        <taxon>Enterobacterales</taxon>
        <taxon>Yersiniaceae</taxon>
        <taxon>Yersinia</taxon>
    </lineage>
</organism>
<gene>
    <name type="ordered locus">YE2273</name>
</gene>